<gene>
    <name evidence="1" type="primary">uvrC</name>
    <name type="ordered locus">Dalk_0774</name>
</gene>
<accession>B8FHR2</accession>
<protein>
    <recommendedName>
        <fullName evidence="1">UvrABC system protein C</fullName>
        <shortName evidence="1">Protein UvrC</shortName>
    </recommendedName>
    <alternativeName>
        <fullName evidence="1">Excinuclease ABC subunit C</fullName>
    </alternativeName>
</protein>
<name>UVRC_DESAL</name>
<feature type="chain" id="PRO_1000200580" description="UvrABC system protein C">
    <location>
        <begin position="1"/>
        <end position="603"/>
    </location>
</feature>
<feature type="domain" description="GIY-YIG" evidence="1">
    <location>
        <begin position="13"/>
        <end position="92"/>
    </location>
</feature>
<feature type="domain" description="UVR" evidence="1">
    <location>
        <begin position="202"/>
        <end position="237"/>
    </location>
</feature>
<evidence type="ECO:0000255" key="1">
    <source>
        <dbReference type="HAMAP-Rule" id="MF_00203"/>
    </source>
</evidence>
<proteinExistence type="inferred from homology"/>
<organism>
    <name type="scientific">Desulfatibacillum aliphaticivorans</name>
    <dbReference type="NCBI Taxonomy" id="218208"/>
    <lineage>
        <taxon>Bacteria</taxon>
        <taxon>Pseudomonadati</taxon>
        <taxon>Thermodesulfobacteriota</taxon>
        <taxon>Desulfobacteria</taxon>
        <taxon>Desulfobacterales</taxon>
        <taxon>Desulfatibacillaceae</taxon>
        <taxon>Desulfatibacillum</taxon>
    </lineage>
</organism>
<dbReference type="EMBL" id="CP001322">
    <property type="protein sequence ID" value="ACL02479.1"/>
    <property type="molecule type" value="Genomic_DNA"/>
</dbReference>
<dbReference type="RefSeq" id="WP_012609918.1">
    <property type="nucleotide sequence ID" value="NC_011768.1"/>
</dbReference>
<dbReference type="SMR" id="B8FHR2"/>
<dbReference type="KEGG" id="dal:Dalk_0774"/>
<dbReference type="eggNOG" id="COG0322">
    <property type="taxonomic scope" value="Bacteria"/>
</dbReference>
<dbReference type="HOGENOM" id="CLU_014841_3_2_7"/>
<dbReference type="Proteomes" id="UP000000739">
    <property type="component" value="Chromosome"/>
</dbReference>
<dbReference type="GO" id="GO:0005737">
    <property type="term" value="C:cytoplasm"/>
    <property type="evidence" value="ECO:0007669"/>
    <property type="project" value="UniProtKB-SubCell"/>
</dbReference>
<dbReference type="GO" id="GO:0009380">
    <property type="term" value="C:excinuclease repair complex"/>
    <property type="evidence" value="ECO:0007669"/>
    <property type="project" value="InterPro"/>
</dbReference>
<dbReference type="GO" id="GO:0003677">
    <property type="term" value="F:DNA binding"/>
    <property type="evidence" value="ECO:0007669"/>
    <property type="project" value="UniProtKB-UniRule"/>
</dbReference>
<dbReference type="GO" id="GO:0009381">
    <property type="term" value="F:excinuclease ABC activity"/>
    <property type="evidence" value="ECO:0007669"/>
    <property type="project" value="UniProtKB-UniRule"/>
</dbReference>
<dbReference type="GO" id="GO:0006289">
    <property type="term" value="P:nucleotide-excision repair"/>
    <property type="evidence" value="ECO:0007669"/>
    <property type="project" value="UniProtKB-UniRule"/>
</dbReference>
<dbReference type="GO" id="GO:0009432">
    <property type="term" value="P:SOS response"/>
    <property type="evidence" value="ECO:0007669"/>
    <property type="project" value="UniProtKB-UniRule"/>
</dbReference>
<dbReference type="CDD" id="cd10434">
    <property type="entry name" value="GIY-YIG_UvrC_Cho"/>
    <property type="match status" value="1"/>
</dbReference>
<dbReference type="FunFam" id="1.10.150.20:FF:000005">
    <property type="entry name" value="UvrABC system protein C"/>
    <property type="match status" value="1"/>
</dbReference>
<dbReference type="FunFam" id="3.40.1440.10:FF:000001">
    <property type="entry name" value="UvrABC system protein C"/>
    <property type="match status" value="1"/>
</dbReference>
<dbReference type="Gene3D" id="1.10.150.20">
    <property type="entry name" value="5' to 3' exonuclease, C-terminal subdomain"/>
    <property type="match status" value="1"/>
</dbReference>
<dbReference type="Gene3D" id="3.40.1440.10">
    <property type="entry name" value="GIY-YIG endonuclease"/>
    <property type="match status" value="1"/>
</dbReference>
<dbReference type="Gene3D" id="4.10.860.10">
    <property type="entry name" value="UVR domain"/>
    <property type="match status" value="1"/>
</dbReference>
<dbReference type="Gene3D" id="3.30.420.340">
    <property type="entry name" value="UvrC, RNAse H endonuclease domain"/>
    <property type="match status" value="1"/>
</dbReference>
<dbReference type="HAMAP" id="MF_00203">
    <property type="entry name" value="UvrC"/>
    <property type="match status" value="1"/>
</dbReference>
<dbReference type="InterPro" id="IPR000305">
    <property type="entry name" value="GIY-YIG_endonuc"/>
</dbReference>
<dbReference type="InterPro" id="IPR035901">
    <property type="entry name" value="GIY-YIG_endonuc_sf"/>
</dbReference>
<dbReference type="InterPro" id="IPR047296">
    <property type="entry name" value="GIY-YIG_UvrC_Cho"/>
</dbReference>
<dbReference type="InterPro" id="IPR003583">
    <property type="entry name" value="Hlx-hairpin-Hlx_DNA-bd_motif"/>
</dbReference>
<dbReference type="InterPro" id="IPR010994">
    <property type="entry name" value="RuvA_2-like"/>
</dbReference>
<dbReference type="InterPro" id="IPR001943">
    <property type="entry name" value="UVR_dom"/>
</dbReference>
<dbReference type="InterPro" id="IPR036876">
    <property type="entry name" value="UVR_dom_sf"/>
</dbReference>
<dbReference type="InterPro" id="IPR050066">
    <property type="entry name" value="UvrABC_protein_C"/>
</dbReference>
<dbReference type="InterPro" id="IPR004791">
    <property type="entry name" value="UvrC"/>
</dbReference>
<dbReference type="InterPro" id="IPR001162">
    <property type="entry name" value="UvrC_RNase_H_dom"/>
</dbReference>
<dbReference type="InterPro" id="IPR038476">
    <property type="entry name" value="UvrC_RNase_H_dom_sf"/>
</dbReference>
<dbReference type="NCBIfam" id="NF001824">
    <property type="entry name" value="PRK00558.1-5"/>
    <property type="match status" value="1"/>
</dbReference>
<dbReference type="NCBIfam" id="TIGR00194">
    <property type="entry name" value="uvrC"/>
    <property type="match status" value="1"/>
</dbReference>
<dbReference type="PANTHER" id="PTHR30562:SF1">
    <property type="entry name" value="UVRABC SYSTEM PROTEIN C"/>
    <property type="match status" value="1"/>
</dbReference>
<dbReference type="PANTHER" id="PTHR30562">
    <property type="entry name" value="UVRC/OXIDOREDUCTASE"/>
    <property type="match status" value="1"/>
</dbReference>
<dbReference type="Pfam" id="PF01541">
    <property type="entry name" value="GIY-YIG"/>
    <property type="match status" value="1"/>
</dbReference>
<dbReference type="Pfam" id="PF14520">
    <property type="entry name" value="HHH_5"/>
    <property type="match status" value="1"/>
</dbReference>
<dbReference type="Pfam" id="PF02151">
    <property type="entry name" value="UVR"/>
    <property type="match status" value="1"/>
</dbReference>
<dbReference type="Pfam" id="PF22920">
    <property type="entry name" value="UvrC_RNaseH"/>
    <property type="match status" value="1"/>
</dbReference>
<dbReference type="Pfam" id="PF08459">
    <property type="entry name" value="UvrC_RNaseH_dom"/>
    <property type="match status" value="1"/>
</dbReference>
<dbReference type="SMART" id="SM00465">
    <property type="entry name" value="GIYc"/>
    <property type="match status" value="1"/>
</dbReference>
<dbReference type="SMART" id="SM00278">
    <property type="entry name" value="HhH1"/>
    <property type="match status" value="2"/>
</dbReference>
<dbReference type="SUPFAM" id="SSF46600">
    <property type="entry name" value="C-terminal UvrC-binding domain of UvrB"/>
    <property type="match status" value="1"/>
</dbReference>
<dbReference type="SUPFAM" id="SSF82771">
    <property type="entry name" value="GIY-YIG endonuclease"/>
    <property type="match status" value="1"/>
</dbReference>
<dbReference type="SUPFAM" id="SSF47781">
    <property type="entry name" value="RuvA domain 2-like"/>
    <property type="match status" value="1"/>
</dbReference>
<dbReference type="PROSITE" id="PS50164">
    <property type="entry name" value="GIY_YIG"/>
    <property type="match status" value="1"/>
</dbReference>
<dbReference type="PROSITE" id="PS50151">
    <property type="entry name" value="UVR"/>
    <property type="match status" value="1"/>
</dbReference>
<dbReference type="PROSITE" id="PS50165">
    <property type="entry name" value="UVRC"/>
    <property type="match status" value="1"/>
</dbReference>
<sequence length="603" mass="68785">MSEIEKKLATLSNGPGVYLMKDESGEIIYVGKARSLKKRVSSYFLEKPNRDLKTGILVKKIASFDAILVTTEKEALILEANLIRKHKPRYNILLKDGKRFPSLRIDVRTSYPRLEVVRKVKKDGAIYFGPFSSAGKLRSTLKIINKTFQLRKCKQKEPPKRNRPCLNYQMGQCLGPCCLPVDRDEYLDMVNEVILFLKGRTNDLLQKIKEQMAAASERQEYELAARLRDRMFAIQATVEKQAAVTTDFVDRDVIGIDREPEGSAISVLYIRGGFLLGSRNYNFDEVLGTDSESIQAFLRQYYDKDRFIPDEVFVPCQLENMELMEQWLTETAEKRVVLHWPQRGEKTRLIEMANENAHEALKDRISSENVFKSLLERLQKRLRMDRPPRRIECFDISHTGGNQTVASMIVFEDGKEAKSEYRTFNIDSLDHPDDYAAMHEVMARRFSPDKDWPTPDVLLIDGGKGQLSITASVLDGLGVMGAFEVISIAKKDEAKKETMDKIYRPGQANPVVFGRDGDVLLFLQRVRDEAHRFAITTHRKKRAKTIRKSALDSVPGIGEKRKKALLRHFGSIKRLKEASPEDIAQVPGISVKRAQEILEALDA</sequence>
<comment type="function">
    <text evidence="1">The UvrABC repair system catalyzes the recognition and processing of DNA lesions. UvrC both incises the 5' and 3' sides of the lesion. The N-terminal half is responsible for the 3' incision and the C-terminal half is responsible for the 5' incision.</text>
</comment>
<comment type="subunit">
    <text evidence="1">Interacts with UvrB in an incision complex.</text>
</comment>
<comment type="subcellular location">
    <subcellularLocation>
        <location evidence="1">Cytoplasm</location>
    </subcellularLocation>
</comment>
<comment type="similarity">
    <text evidence="1">Belongs to the UvrC family.</text>
</comment>
<reference key="1">
    <citation type="journal article" date="2012" name="Environ. Microbiol.">
        <title>The genome sequence of Desulfatibacillum alkenivorans AK-01: a blueprint for anaerobic alkane oxidation.</title>
        <authorList>
            <person name="Callaghan A.V."/>
            <person name="Morris B.E."/>
            <person name="Pereira I.A."/>
            <person name="McInerney M.J."/>
            <person name="Austin R.N."/>
            <person name="Groves J.T."/>
            <person name="Kukor J.J."/>
            <person name="Suflita J.M."/>
            <person name="Young L.Y."/>
            <person name="Zylstra G.J."/>
            <person name="Wawrik B."/>
        </authorList>
    </citation>
    <scope>NUCLEOTIDE SEQUENCE [LARGE SCALE GENOMIC DNA]</scope>
    <source>
        <strain>AK-01</strain>
    </source>
</reference>
<keyword id="KW-0963">Cytoplasm</keyword>
<keyword id="KW-0227">DNA damage</keyword>
<keyword id="KW-0228">DNA excision</keyword>
<keyword id="KW-0234">DNA repair</keyword>
<keyword id="KW-0267">Excision nuclease</keyword>
<keyword id="KW-1185">Reference proteome</keyword>
<keyword id="KW-0742">SOS response</keyword>